<dbReference type="EC" id="3.5.1.96" evidence="1"/>
<dbReference type="EMBL" id="AE006468">
    <property type="protein sequence ID" value="AAL20232.1"/>
    <property type="molecule type" value="Genomic_DNA"/>
</dbReference>
<dbReference type="RefSeq" id="NP_460273.1">
    <property type="nucleotide sequence ID" value="NC_003197.2"/>
</dbReference>
<dbReference type="RefSeq" id="WP_000368454.1">
    <property type="nucleotide sequence ID" value="NC_003197.2"/>
</dbReference>
<dbReference type="SMR" id="Q8ZPU8"/>
<dbReference type="STRING" id="99287.STM1307"/>
<dbReference type="PaxDb" id="99287-STM1307"/>
<dbReference type="GeneID" id="1252825"/>
<dbReference type="KEGG" id="stm:STM1307"/>
<dbReference type="PATRIC" id="fig|99287.12.peg.1389"/>
<dbReference type="HOGENOM" id="CLU_071608_0_0_6"/>
<dbReference type="OMA" id="CAVHGNE"/>
<dbReference type="PhylomeDB" id="Q8ZPU8"/>
<dbReference type="BioCyc" id="SENT99287:STM1307-MONOMER"/>
<dbReference type="UniPathway" id="UPA00185">
    <property type="reaction ID" value="UER00283"/>
</dbReference>
<dbReference type="Proteomes" id="UP000001014">
    <property type="component" value="Chromosome"/>
</dbReference>
<dbReference type="GO" id="GO:0016811">
    <property type="term" value="F:hydrolase activity, acting on carbon-nitrogen (but not peptide) bonds, in linear amides"/>
    <property type="evidence" value="ECO:0000318"/>
    <property type="project" value="GO_Central"/>
</dbReference>
<dbReference type="GO" id="GO:0016788">
    <property type="term" value="F:hydrolase activity, acting on ester bonds"/>
    <property type="evidence" value="ECO:0007669"/>
    <property type="project" value="UniProtKB-UniRule"/>
</dbReference>
<dbReference type="GO" id="GO:0009017">
    <property type="term" value="F:succinylglutamate desuccinylase activity"/>
    <property type="evidence" value="ECO:0007669"/>
    <property type="project" value="UniProtKB-EC"/>
</dbReference>
<dbReference type="GO" id="GO:0008270">
    <property type="term" value="F:zinc ion binding"/>
    <property type="evidence" value="ECO:0007669"/>
    <property type="project" value="UniProtKB-UniRule"/>
</dbReference>
<dbReference type="GO" id="GO:0019544">
    <property type="term" value="P:arginine catabolic process to glutamate"/>
    <property type="evidence" value="ECO:0007669"/>
    <property type="project" value="UniProtKB-UniRule"/>
</dbReference>
<dbReference type="GO" id="GO:0019545">
    <property type="term" value="P:arginine catabolic process to succinate"/>
    <property type="evidence" value="ECO:0007669"/>
    <property type="project" value="UniProtKB-UniRule"/>
</dbReference>
<dbReference type="CDD" id="cd03855">
    <property type="entry name" value="M14_ASTE"/>
    <property type="match status" value="1"/>
</dbReference>
<dbReference type="FunFam" id="3.40.630.10:FF:000017">
    <property type="entry name" value="Succinylglutamate desuccinylase"/>
    <property type="match status" value="1"/>
</dbReference>
<dbReference type="Gene3D" id="3.40.630.10">
    <property type="entry name" value="Zn peptidases"/>
    <property type="match status" value="1"/>
</dbReference>
<dbReference type="HAMAP" id="MF_00767">
    <property type="entry name" value="Arg_catab_AstE"/>
    <property type="match status" value="1"/>
</dbReference>
<dbReference type="InterPro" id="IPR050178">
    <property type="entry name" value="AspA/AstE_fam"/>
</dbReference>
<dbReference type="InterPro" id="IPR055438">
    <property type="entry name" value="AstE_AspA_cat"/>
</dbReference>
<dbReference type="InterPro" id="IPR007036">
    <property type="entry name" value="Aste_AspA_hybrid_dom"/>
</dbReference>
<dbReference type="InterPro" id="IPR016681">
    <property type="entry name" value="SuccinylGlu_desuccinylase"/>
</dbReference>
<dbReference type="NCBIfam" id="TIGR03242">
    <property type="entry name" value="arg_catab_astE"/>
    <property type="match status" value="1"/>
</dbReference>
<dbReference type="NCBIfam" id="NF003706">
    <property type="entry name" value="PRK05324.1"/>
    <property type="match status" value="1"/>
</dbReference>
<dbReference type="PANTHER" id="PTHR15162">
    <property type="entry name" value="ASPARTOACYLASE"/>
    <property type="match status" value="1"/>
</dbReference>
<dbReference type="PANTHER" id="PTHR15162:SF7">
    <property type="entry name" value="SUCCINYLGLUTAMATE DESUCCINYLASE"/>
    <property type="match status" value="1"/>
</dbReference>
<dbReference type="Pfam" id="PF24827">
    <property type="entry name" value="AstE_AspA_cat"/>
    <property type="match status" value="1"/>
</dbReference>
<dbReference type="Pfam" id="PF04952">
    <property type="entry name" value="AstE_AspA_hybrid"/>
    <property type="match status" value="1"/>
</dbReference>
<dbReference type="PIRSF" id="PIRSF017020">
    <property type="entry name" value="AstE"/>
    <property type="match status" value="1"/>
</dbReference>
<dbReference type="SUPFAM" id="SSF53187">
    <property type="entry name" value="Zn-dependent exopeptidases"/>
    <property type="match status" value="1"/>
</dbReference>
<comment type="function">
    <text evidence="1">Transforms N(2)-succinylglutamate into succinate and glutamate.</text>
</comment>
<comment type="catalytic activity">
    <reaction evidence="1">
        <text>N-succinyl-L-glutamate + H2O = L-glutamate + succinate</text>
        <dbReference type="Rhea" id="RHEA:15169"/>
        <dbReference type="ChEBI" id="CHEBI:15377"/>
        <dbReference type="ChEBI" id="CHEBI:29985"/>
        <dbReference type="ChEBI" id="CHEBI:30031"/>
        <dbReference type="ChEBI" id="CHEBI:58763"/>
        <dbReference type="EC" id="3.5.1.96"/>
    </reaction>
</comment>
<comment type="cofactor">
    <cofactor evidence="1">
        <name>Zn(2+)</name>
        <dbReference type="ChEBI" id="CHEBI:29105"/>
    </cofactor>
    <text evidence="1">Binds 1 zinc ion per subunit.</text>
</comment>
<comment type="pathway">
    <text evidence="1">Amino-acid degradation; L-arginine degradation via AST pathway; L-glutamate and succinate from L-arginine: step 5/5.</text>
</comment>
<comment type="induction">
    <text evidence="2">By nitrogen and carbon starvation, and arginine, via the ArgR and Crp transcriptional regulators.</text>
</comment>
<comment type="similarity">
    <text evidence="1">Belongs to the AspA/AstE family. Succinylglutamate desuccinylase subfamily.</text>
</comment>
<evidence type="ECO:0000255" key="1">
    <source>
        <dbReference type="HAMAP-Rule" id="MF_00767"/>
    </source>
</evidence>
<evidence type="ECO:0000269" key="2">
    <source>
    </source>
</evidence>
<keyword id="KW-0056">Arginine metabolism</keyword>
<keyword id="KW-0378">Hydrolase</keyword>
<keyword id="KW-0479">Metal-binding</keyword>
<keyword id="KW-1185">Reference proteome</keyword>
<keyword id="KW-0862">Zinc</keyword>
<sequence length="322" mass="35641">MDNFLALTLSGTTPRVTQGKGAGFRWRWLGHGLLELTPDAPVDRALILSAGIHGNETAPVEMLDKLLSALYSGSLTLTWRVLVVLGNPQALAAGIRYCHSDMNRMFGGRWQSFAESDETRRARELELSLETFFSSGQARVRWHLDLHTAIRGSHHLRFGVLPQRDRPWETDFLAWLGAAGLEALVFHQAPGGTFTHFSSEHFGALSCTLELGKALPFRQNDLTQFNVTSQALSALLSGVETSTSFSPPLRYRVVSQITRHSDKFALYMDAQTLNFTAFAKGTLLAEEGDKRVTVTHDVEYVLFPNPSVACGLRAGLMLERLP</sequence>
<accession>Q8ZPU8</accession>
<proteinExistence type="evidence at transcript level"/>
<protein>
    <recommendedName>
        <fullName evidence="1">Succinylglutamate desuccinylase</fullName>
        <ecNumber evidence="1">3.5.1.96</ecNumber>
    </recommendedName>
</protein>
<reference key="1">
    <citation type="journal article" date="2001" name="Nature">
        <title>Complete genome sequence of Salmonella enterica serovar Typhimurium LT2.</title>
        <authorList>
            <person name="McClelland M."/>
            <person name="Sanderson K.E."/>
            <person name="Spieth J."/>
            <person name="Clifton S.W."/>
            <person name="Latreille P."/>
            <person name="Courtney L."/>
            <person name="Porwollik S."/>
            <person name="Ali J."/>
            <person name="Dante M."/>
            <person name="Du F."/>
            <person name="Hou S."/>
            <person name="Layman D."/>
            <person name="Leonard S."/>
            <person name="Nguyen C."/>
            <person name="Scott K."/>
            <person name="Holmes A."/>
            <person name="Grewal N."/>
            <person name="Mulvaney E."/>
            <person name="Ryan E."/>
            <person name="Sun H."/>
            <person name="Florea L."/>
            <person name="Miller W."/>
            <person name="Stoneking T."/>
            <person name="Nhan M."/>
            <person name="Waterston R."/>
            <person name="Wilson R.K."/>
        </authorList>
    </citation>
    <scope>NUCLEOTIDE SEQUENCE [LARGE SCALE GENOMIC DNA]</scope>
    <source>
        <strain>LT2 / SGSC1412 / ATCC 700720</strain>
    </source>
</reference>
<reference key="2">
    <citation type="journal article" date="1999" name="J. Bacteriol.">
        <title>Role of ArgR in activation of the ast operon, encoding enzymes of the arginine succinyltransferase pathway in Salmonella typhimurium.</title>
        <authorList>
            <person name="Lu C.-D."/>
            <person name="Abdelal A.T."/>
        </authorList>
    </citation>
    <scope>INDUCTION</scope>
</reference>
<feature type="chain" id="PRO_0000174647" description="Succinylglutamate desuccinylase">
    <location>
        <begin position="1"/>
        <end position="322"/>
    </location>
</feature>
<feature type="active site" evidence="1">
    <location>
        <position position="210"/>
    </location>
</feature>
<feature type="binding site" evidence="1">
    <location>
        <position position="53"/>
    </location>
    <ligand>
        <name>Zn(2+)</name>
        <dbReference type="ChEBI" id="CHEBI:29105"/>
    </ligand>
</feature>
<feature type="binding site" evidence="1">
    <location>
        <position position="56"/>
    </location>
    <ligand>
        <name>Zn(2+)</name>
        <dbReference type="ChEBI" id="CHEBI:29105"/>
    </ligand>
</feature>
<feature type="binding site" evidence="1">
    <location>
        <position position="147"/>
    </location>
    <ligand>
        <name>Zn(2+)</name>
        <dbReference type="ChEBI" id="CHEBI:29105"/>
    </ligand>
</feature>
<organism>
    <name type="scientific">Salmonella typhimurium (strain LT2 / SGSC1412 / ATCC 700720)</name>
    <dbReference type="NCBI Taxonomy" id="99287"/>
    <lineage>
        <taxon>Bacteria</taxon>
        <taxon>Pseudomonadati</taxon>
        <taxon>Pseudomonadota</taxon>
        <taxon>Gammaproteobacteria</taxon>
        <taxon>Enterobacterales</taxon>
        <taxon>Enterobacteriaceae</taxon>
        <taxon>Salmonella</taxon>
    </lineage>
</organism>
<gene>
    <name evidence="1" type="primary">astE</name>
    <name type="ordered locus">STM1307</name>
</gene>
<name>ASTE_SALTY</name>